<evidence type="ECO:0000250" key="1">
    <source>
        <dbReference type="UniProtKB" id="P50389"/>
    </source>
</evidence>
<evidence type="ECO:0000255" key="2">
    <source>
        <dbReference type="HAMAP-Rule" id="MF_01627"/>
    </source>
</evidence>
<gene>
    <name evidence="2" type="primary">deoD2</name>
    <name type="ordered locus">VPA1475</name>
</gene>
<name>DEOD2_VIBPA</name>
<sequence>MATPHINAQPGDFAETVLMPGDPLRAKYIAETFLEDVKQVCDVRNMFGFTGTYKGKKVSVMGHGMGIPSCCIYVHELIAEYGVKNVIRVGSCGAVRDDVNLMDVVIGMGASTDSKVNRIRFNNHDFAAIADFSLLEEAVKQARAQEVPVKVGNVFSADLFYTPEADIFEKMEKLGILGVDMEAAGIYGVAADLGAKALTILTVSDHIIRGEKLSSEERQKSFNDMMKVALETAINI</sequence>
<proteinExistence type="inferred from homology"/>
<keyword id="KW-0328">Glycosyltransferase</keyword>
<keyword id="KW-0808">Transferase</keyword>
<organism>
    <name type="scientific">Vibrio parahaemolyticus serotype O3:K6 (strain RIMD 2210633)</name>
    <dbReference type="NCBI Taxonomy" id="223926"/>
    <lineage>
        <taxon>Bacteria</taxon>
        <taxon>Pseudomonadati</taxon>
        <taxon>Pseudomonadota</taxon>
        <taxon>Gammaproteobacteria</taxon>
        <taxon>Vibrionales</taxon>
        <taxon>Vibrionaceae</taxon>
        <taxon>Vibrio</taxon>
    </lineage>
</organism>
<comment type="function">
    <text evidence="2">Catalyzes the reversible phosphorolytic breakdown of the N-glycosidic bond in the beta-(deoxy)ribonucleoside molecules, with the formation of the corresponding free purine bases and pentose-1-phosphate.</text>
</comment>
<comment type="catalytic activity">
    <reaction evidence="2">
        <text>a purine D-ribonucleoside + phosphate = a purine nucleobase + alpha-D-ribose 1-phosphate</text>
        <dbReference type="Rhea" id="RHEA:19805"/>
        <dbReference type="ChEBI" id="CHEBI:26386"/>
        <dbReference type="ChEBI" id="CHEBI:43474"/>
        <dbReference type="ChEBI" id="CHEBI:57720"/>
        <dbReference type="ChEBI" id="CHEBI:142355"/>
        <dbReference type="EC" id="2.4.2.1"/>
    </reaction>
</comment>
<comment type="catalytic activity">
    <reaction evidence="2">
        <text>a purine 2'-deoxy-D-ribonucleoside + phosphate = a purine nucleobase + 2-deoxy-alpha-D-ribose 1-phosphate</text>
        <dbReference type="Rhea" id="RHEA:36431"/>
        <dbReference type="ChEBI" id="CHEBI:26386"/>
        <dbReference type="ChEBI" id="CHEBI:43474"/>
        <dbReference type="ChEBI" id="CHEBI:57259"/>
        <dbReference type="ChEBI" id="CHEBI:142361"/>
        <dbReference type="EC" id="2.4.2.1"/>
    </reaction>
</comment>
<comment type="subunit">
    <text evidence="2">Homohexamer; trimer of homodimers.</text>
</comment>
<comment type="similarity">
    <text evidence="2">Belongs to the PNP/UDP phosphorylase family.</text>
</comment>
<protein>
    <recommendedName>
        <fullName evidence="2">Purine nucleoside phosphorylase DeoD-type 2</fullName>
        <shortName evidence="2">PNP 2</shortName>
        <ecNumber evidence="2">2.4.2.1</ecNumber>
    </recommendedName>
</protein>
<accession>Q87G42</accession>
<reference key="1">
    <citation type="journal article" date="2003" name="Lancet">
        <title>Genome sequence of Vibrio parahaemolyticus: a pathogenic mechanism distinct from that of V. cholerae.</title>
        <authorList>
            <person name="Makino K."/>
            <person name="Oshima K."/>
            <person name="Kurokawa K."/>
            <person name="Yokoyama K."/>
            <person name="Uda T."/>
            <person name="Tagomori K."/>
            <person name="Iijima Y."/>
            <person name="Najima M."/>
            <person name="Nakano M."/>
            <person name="Yamashita A."/>
            <person name="Kubota Y."/>
            <person name="Kimura S."/>
            <person name="Yasunaga T."/>
            <person name="Honda T."/>
            <person name="Shinagawa H."/>
            <person name="Hattori M."/>
            <person name="Iida T."/>
        </authorList>
    </citation>
    <scope>NUCLEOTIDE SEQUENCE [LARGE SCALE GENOMIC DNA]</scope>
    <source>
        <strain>RIMD 2210633</strain>
    </source>
</reference>
<feature type="chain" id="PRO_0000063175" description="Purine nucleoside phosphorylase DeoD-type 2">
    <location>
        <begin position="1"/>
        <end position="236"/>
    </location>
</feature>
<feature type="active site" description="Proton donor" evidence="2">
    <location>
        <position position="205"/>
    </location>
</feature>
<feature type="binding site" evidence="1">
    <location>
        <position position="5"/>
    </location>
    <ligand>
        <name>a purine D-ribonucleoside</name>
        <dbReference type="ChEBI" id="CHEBI:142355"/>
        <note>ligand shared between dimeric partners</note>
    </ligand>
</feature>
<feature type="binding site" description="in other chain" evidence="1">
    <location>
        <position position="21"/>
    </location>
    <ligand>
        <name>phosphate</name>
        <dbReference type="ChEBI" id="CHEBI:43474"/>
        <note>ligand shared between dimeric partners</note>
    </ligand>
</feature>
<feature type="binding site" description="in other chain" evidence="1">
    <location>
        <position position="25"/>
    </location>
    <ligand>
        <name>phosphate</name>
        <dbReference type="ChEBI" id="CHEBI:43474"/>
        <note>ligand shared between dimeric partners</note>
    </ligand>
</feature>
<feature type="binding site" evidence="1">
    <location>
        <position position="44"/>
    </location>
    <ligand>
        <name>phosphate</name>
        <dbReference type="ChEBI" id="CHEBI:43474"/>
        <note>ligand shared between dimeric partners</note>
    </ligand>
</feature>
<feature type="binding site" description="in other chain" evidence="1">
    <location>
        <begin position="88"/>
        <end position="91"/>
    </location>
    <ligand>
        <name>phosphate</name>
        <dbReference type="ChEBI" id="CHEBI:43474"/>
        <note>ligand shared between dimeric partners</note>
    </ligand>
</feature>
<feature type="binding site" description="in other chain" evidence="1">
    <location>
        <begin position="180"/>
        <end position="182"/>
    </location>
    <ligand>
        <name>a purine D-ribonucleoside</name>
        <dbReference type="ChEBI" id="CHEBI:142355"/>
        <note>ligand shared between dimeric partners</note>
    </ligand>
</feature>
<feature type="binding site" description="in other chain" evidence="1">
    <location>
        <begin position="204"/>
        <end position="205"/>
    </location>
    <ligand>
        <name>a purine D-ribonucleoside</name>
        <dbReference type="ChEBI" id="CHEBI:142355"/>
        <note>ligand shared between dimeric partners</note>
    </ligand>
</feature>
<feature type="site" description="Important for catalytic activity" evidence="2">
    <location>
        <position position="218"/>
    </location>
</feature>
<dbReference type="EC" id="2.4.2.1" evidence="2"/>
<dbReference type="EMBL" id="BA000032">
    <property type="protein sequence ID" value="BAC62818.1"/>
    <property type="molecule type" value="Genomic_DNA"/>
</dbReference>
<dbReference type="RefSeq" id="NP_800985.1">
    <property type="nucleotide sequence ID" value="NC_004605.1"/>
</dbReference>
<dbReference type="SMR" id="Q87G42"/>
<dbReference type="GeneID" id="1192171"/>
<dbReference type="KEGG" id="vpa:VPA1475"/>
<dbReference type="PATRIC" id="fig|223926.6.peg.4401"/>
<dbReference type="eggNOG" id="COG0813">
    <property type="taxonomic scope" value="Bacteria"/>
</dbReference>
<dbReference type="HOGENOM" id="CLU_068457_2_0_6"/>
<dbReference type="Proteomes" id="UP000002493">
    <property type="component" value="Chromosome 2"/>
</dbReference>
<dbReference type="GO" id="GO:0005829">
    <property type="term" value="C:cytosol"/>
    <property type="evidence" value="ECO:0007669"/>
    <property type="project" value="TreeGrafter"/>
</dbReference>
<dbReference type="GO" id="GO:0004731">
    <property type="term" value="F:purine-nucleoside phosphorylase activity"/>
    <property type="evidence" value="ECO:0007669"/>
    <property type="project" value="UniProtKB-UniRule"/>
</dbReference>
<dbReference type="GO" id="GO:0006152">
    <property type="term" value="P:purine nucleoside catabolic process"/>
    <property type="evidence" value="ECO:0007669"/>
    <property type="project" value="TreeGrafter"/>
</dbReference>
<dbReference type="CDD" id="cd09006">
    <property type="entry name" value="PNP_EcPNPI-like"/>
    <property type="match status" value="1"/>
</dbReference>
<dbReference type="FunFam" id="3.40.50.1580:FF:000002">
    <property type="entry name" value="Purine nucleoside phosphorylase DeoD-type"/>
    <property type="match status" value="1"/>
</dbReference>
<dbReference type="Gene3D" id="3.40.50.1580">
    <property type="entry name" value="Nucleoside phosphorylase domain"/>
    <property type="match status" value="1"/>
</dbReference>
<dbReference type="HAMAP" id="MF_01627">
    <property type="entry name" value="Pur_nucleosid_phosp"/>
    <property type="match status" value="1"/>
</dbReference>
<dbReference type="InterPro" id="IPR004402">
    <property type="entry name" value="DeoD-type"/>
</dbReference>
<dbReference type="InterPro" id="IPR000845">
    <property type="entry name" value="Nucleoside_phosphorylase_d"/>
</dbReference>
<dbReference type="InterPro" id="IPR035994">
    <property type="entry name" value="Nucleoside_phosphorylase_sf"/>
</dbReference>
<dbReference type="NCBIfam" id="TIGR00107">
    <property type="entry name" value="deoD"/>
    <property type="match status" value="1"/>
</dbReference>
<dbReference type="NCBIfam" id="NF004489">
    <property type="entry name" value="PRK05819.1"/>
    <property type="match status" value="1"/>
</dbReference>
<dbReference type="NCBIfam" id="NF009914">
    <property type="entry name" value="PRK13374.1"/>
    <property type="match status" value="1"/>
</dbReference>
<dbReference type="PANTHER" id="PTHR43691:SF11">
    <property type="entry name" value="FI09636P-RELATED"/>
    <property type="match status" value="1"/>
</dbReference>
<dbReference type="PANTHER" id="PTHR43691">
    <property type="entry name" value="URIDINE PHOSPHORYLASE"/>
    <property type="match status" value="1"/>
</dbReference>
<dbReference type="Pfam" id="PF01048">
    <property type="entry name" value="PNP_UDP_1"/>
    <property type="match status" value="1"/>
</dbReference>
<dbReference type="SUPFAM" id="SSF53167">
    <property type="entry name" value="Purine and uridine phosphorylases"/>
    <property type="match status" value="1"/>
</dbReference>